<feature type="chain" id="PRO_1000053861" description="Bifunctional protein PyrR">
    <location>
        <begin position="1"/>
        <end position="175"/>
    </location>
</feature>
<feature type="short sequence motif" description="PRPP-binding" evidence="1">
    <location>
        <begin position="98"/>
        <end position="110"/>
    </location>
</feature>
<organism>
    <name type="scientific">Staphylococcus aureus (strain Mu3 / ATCC 700698)</name>
    <dbReference type="NCBI Taxonomy" id="418127"/>
    <lineage>
        <taxon>Bacteria</taxon>
        <taxon>Bacillati</taxon>
        <taxon>Bacillota</taxon>
        <taxon>Bacilli</taxon>
        <taxon>Bacillales</taxon>
        <taxon>Staphylococcaceae</taxon>
        <taxon>Staphylococcus</taxon>
    </lineage>
</organism>
<evidence type="ECO:0000255" key="1">
    <source>
        <dbReference type="HAMAP-Rule" id="MF_01219"/>
    </source>
</evidence>
<name>PYRR_STAA1</name>
<proteinExistence type="inferred from homology"/>
<dbReference type="EC" id="2.4.2.9" evidence="1"/>
<dbReference type="EMBL" id="AP009324">
    <property type="protein sequence ID" value="BAF78071.1"/>
    <property type="molecule type" value="Genomic_DNA"/>
</dbReference>
<dbReference type="RefSeq" id="WP_000003870.1">
    <property type="nucleotide sequence ID" value="NZ_CTYB01000004.1"/>
</dbReference>
<dbReference type="SMR" id="A7X1E5"/>
<dbReference type="KEGG" id="saw:SAHV_1188"/>
<dbReference type="HOGENOM" id="CLU_094234_2_1_9"/>
<dbReference type="GO" id="GO:0003723">
    <property type="term" value="F:RNA binding"/>
    <property type="evidence" value="ECO:0007669"/>
    <property type="project" value="UniProtKB-UniRule"/>
</dbReference>
<dbReference type="GO" id="GO:0004845">
    <property type="term" value="F:uracil phosphoribosyltransferase activity"/>
    <property type="evidence" value="ECO:0007669"/>
    <property type="project" value="UniProtKB-UniRule"/>
</dbReference>
<dbReference type="GO" id="GO:0006353">
    <property type="term" value="P:DNA-templated transcription termination"/>
    <property type="evidence" value="ECO:0007669"/>
    <property type="project" value="UniProtKB-UniRule"/>
</dbReference>
<dbReference type="CDD" id="cd06223">
    <property type="entry name" value="PRTases_typeI"/>
    <property type="match status" value="1"/>
</dbReference>
<dbReference type="FunFam" id="3.40.50.2020:FF:000020">
    <property type="entry name" value="Bifunctional protein PyrR"/>
    <property type="match status" value="1"/>
</dbReference>
<dbReference type="Gene3D" id="3.40.50.2020">
    <property type="match status" value="1"/>
</dbReference>
<dbReference type="HAMAP" id="MF_01219">
    <property type="entry name" value="PyrR"/>
    <property type="match status" value="1"/>
</dbReference>
<dbReference type="InterPro" id="IPR000836">
    <property type="entry name" value="PRibTrfase_dom"/>
</dbReference>
<dbReference type="InterPro" id="IPR029057">
    <property type="entry name" value="PRTase-like"/>
</dbReference>
<dbReference type="InterPro" id="IPR023050">
    <property type="entry name" value="PyrR"/>
</dbReference>
<dbReference type="InterPro" id="IPR050137">
    <property type="entry name" value="PyrR_bifunctional"/>
</dbReference>
<dbReference type="NCBIfam" id="NF003546">
    <property type="entry name" value="PRK05205.1-2"/>
    <property type="match status" value="1"/>
</dbReference>
<dbReference type="NCBIfam" id="NF003548">
    <property type="entry name" value="PRK05205.1-4"/>
    <property type="match status" value="1"/>
</dbReference>
<dbReference type="NCBIfam" id="NF003549">
    <property type="entry name" value="PRK05205.1-5"/>
    <property type="match status" value="1"/>
</dbReference>
<dbReference type="PANTHER" id="PTHR11608">
    <property type="entry name" value="BIFUNCTIONAL PROTEIN PYRR"/>
    <property type="match status" value="1"/>
</dbReference>
<dbReference type="PANTHER" id="PTHR11608:SF0">
    <property type="entry name" value="BIFUNCTIONAL PROTEIN PYRR"/>
    <property type="match status" value="1"/>
</dbReference>
<dbReference type="Pfam" id="PF00156">
    <property type="entry name" value="Pribosyltran"/>
    <property type="match status" value="1"/>
</dbReference>
<dbReference type="SUPFAM" id="SSF53271">
    <property type="entry name" value="PRTase-like"/>
    <property type="match status" value="1"/>
</dbReference>
<comment type="function">
    <text evidence="1">Regulates transcriptional attenuation of the pyrimidine nucleotide (pyr) operon by binding in a uridine-dependent manner to specific sites on pyr mRNA. This disrupts an antiterminator hairpin in the RNA and favors formation of a downstream transcription terminator, leading to a reduced expression of downstream genes.</text>
</comment>
<comment type="function">
    <text evidence="1">Also displays a weak uracil phosphoribosyltransferase activity which is not physiologically significant.</text>
</comment>
<comment type="catalytic activity">
    <reaction evidence="1">
        <text>UMP + diphosphate = 5-phospho-alpha-D-ribose 1-diphosphate + uracil</text>
        <dbReference type="Rhea" id="RHEA:13017"/>
        <dbReference type="ChEBI" id="CHEBI:17568"/>
        <dbReference type="ChEBI" id="CHEBI:33019"/>
        <dbReference type="ChEBI" id="CHEBI:57865"/>
        <dbReference type="ChEBI" id="CHEBI:58017"/>
        <dbReference type="EC" id="2.4.2.9"/>
    </reaction>
</comment>
<comment type="subunit">
    <text evidence="1">Homodimer and homohexamer; in equilibrium.</text>
</comment>
<comment type="similarity">
    <text evidence="1">Belongs to the purine/pyrimidine phosphoribosyltransferase family. PyrR subfamily.</text>
</comment>
<sequence>MSERIIMDDAAIQRTVTRIAHEILEYNKGTDNLILLGIKTRGEYLANRIQDKIHQIEQQRIPTGTIDITYFRDDIEHMSSLTTKDAIDIDTDITDKVVIIIDDVLYTGRTVRASLDAILLNARPIKIGLAALVDRGHRELPIRADFVGKNIPTSKEETVSVYLEEMDQRNAVIIK</sequence>
<keyword id="KW-0328">Glycosyltransferase</keyword>
<keyword id="KW-0694">RNA-binding</keyword>
<keyword id="KW-0804">Transcription</keyword>
<keyword id="KW-0805">Transcription regulation</keyword>
<keyword id="KW-0806">Transcription termination</keyword>
<keyword id="KW-0808">Transferase</keyword>
<gene>
    <name evidence="1" type="primary">pyrR</name>
    <name type="ordered locus">SAHV_1188</name>
</gene>
<reference key="1">
    <citation type="journal article" date="2008" name="Antimicrob. Agents Chemother.">
        <title>Mutated response regulator graR is responsible for phenotypic conversion of Staphylococcus aureus from heterogeneous vancomycin-intermediate resistance to vancomycin-intermediate resistance.</title>
        <authorList>
            <person name="Neoh H.-M."/>
            <person name="Cui L."/>
            <person name="Yuzawa H."/>
            <person name="Takeuchi F."/>
            <person name="Matsuo M."/>
            <person name="Hiramatsu K."/>
        </authorList>
    </citation>
    <scope>NUCLEOTIDE SEQUENCE [LARGE SCALE GENOMIC DNA]</scope>
    <source>
        <strain>Mu3 / ATCC 700698</strain>
    </source>
</reference>
<protein>
    <recommendedName>
        <fullName evidence="1">Bifunctional protein PyrR</fullName>
    </recommendedName>
    <domain>
        <recommendedName>
            <fullName evidence="1">Pyrimidine operon regulatory protein</fullName>
        </recommendedName>
    </domain>
    <domain>
        <recommendedName>
            <fullName evidence="1">Uracil phosphoribosyltransferase</fullName>
            <shortName evidence="1">UPRTase</shortName>
            <ecNumber evidence="1">2.4.2.9</ecNumber>
        </recommendedName>
    </domain>
</protein>
<accession>A7X1E5</accession>